<name>SSRP_HAEIE</name>
<accession>A5UD90</accession>
<dbReference type="EMBL" id="CP000671">
    <property type="protein sequence ID" value="ABQ98741.1"/>
    <property type="molecule type" value="Genomic_DNA"/>
</dbReference>
<dbReference type="SMR" id="A5UD90"/>
<dbReference type="KEGG" id="hip:CGSHiEE_07060"/>
<dbReference type="HOGENOM" id="CLU_108953_3_0_6"/>
<dbReference type="GO" id="GO:0005829">
    <property type="term" value="C:cytosol"/>
    <property type="evidence" value="ECO:0007669"/>
    <property type="project" value="TreeGrafter"/>
</dbReference>
<dbReference type="GO" id="GO:0003723">
    <property type="term" value="F:RNA binding"/>
    <property type="evidence" value="ECO:0007669"/>
    <property type="project" value="UniProtKB-UniRule"/>
</dbReference>
<dbReference type="GO" id="GO:0070929">
    <property type="term" value="P:trans-translation"/>
    <property type="evidence" value="ECO:0007669"/>
    <property type="project" value="UniProtKB-UniRule"/>
</dbReference>
<dbReference type="CDD" id="cd09294">
    <property type="entry name" value="SmpB"/>
    <property type="match status" value="1"/>
</dbReference>
<dbReference type="Gene3D" id="2.40.280.10">
    <property type="match status" value="1"/>
</dbReference>
<dbReference type="HAMAP" id="MF_00023">
    <property type="entry name" value="SmpB"/>
    <property type="match status" value="1"/>
</dbReference>
<dbReference type="InterPro" id="IPR023620">
    <property type="entry name" value="SmpB"/>
</dbReference>
<dbReference type="InterPro" id="IPR000037">
    <property type="entry name" value="SsrA-bd_prot"/>
</dbReference>
<dbReference type="InterPro" id="IPR020081">
    <property type="entry name" value="SsrA-bd_prot_CS"/>
</dbReference>
<dbReference type="NCBIfam" id="NF003843">
    <property type="entry name" value="PRK05422.1"/>
    <property type="match status" value="1"/>
</dbReference>
<dbReference type="NCBIfam" id="TIGR00086">
    <property type="entry name" value="smpB"/>
    <property type="match status" value="1"/>
</dbReference>
<dbReference type="PANTHER" id="PTHR30308:SF2">
    <property type="entry name" value="SSRA-BINDING PROTEIN"/>
    <property type="match status" value="1"/>
</dbReference>
<dbReference type="PANTHER" id="PTHR30308">
    <property type="entry name" value="TMRNA-BINDING COMPONENT OF TRANS-TRANSLATION TAGGING COMPLEX"/>
    <property type="match status" value="1"/>
</dbReference>
<dbReference type="Pfam" id="PF01668">
    <property type="entry name" value="SmpB"/>
    <property type="match status" value="1"/>
</dbReference>
<dbReference type="SUPFAM" id="SSF74982">
    <property type="entry name" value="Small protein B (SmpB)"/>
    <property type="match status" value="1"/>
</dbReference>
<dbReference type="PROSITE" id="PS01317">
    <property type="entry name" value="SSRP"/>
    <property type="match status" value="1"/>
</dbReference>
<organism>
    <name type="scientific">Haemophilus influenzae (strain PittEE)</name>
    <dbReference type="NCBI Taxonomy" id="374930"/>
    <lineage>
        <taxon>Bacteria</taxon>
        <taxon>Pseudomonadati</taxon>
        <taxon>Pseudomonadota</taxon>
        <taxon>Gammaproteobacteria</taxon>
        <taxon>Pasteurellales</taxon>
        <taxon>Pasteurellaceae</taxon>
        <taxon>Haemophilus</taxon>
    </lineage>
</organism>
<proteinExistence type="inferred from homology"/>
<protein>
    <recommendedName>
        <fullName evidence="1">SsrA-binding protein</fullName>
    </recommendedName>
    <alternativeName>
        <fullName evidence="1">Small protein B</fullName>
    </alternativeName>
</protein>
<gene>
    <name evidence="1" type="primary">smpB</name>
    <name type="ordered locus">CGSHiEE_07060</name>
</gene>
<comment type="function">
    <text evidence="1">Required for rescue of stalled ribosomes mediated by trans-translation. Binds to transfer-messenger RNA (tmRNA), required for stable association of tmRNA with ribosomes. tmRNA and SmpB together mimic tRNA shape, replacing the anticodon stem-loop with SmpB. tmRNA is encoded by the ssrA gene; the 2 termini fold to resemble tRNA(Ala) and it encodes a 'tag peptide', a short internal open reading frame. During trans-translation Ala-aminoacylated tmRNA acts like a tRNA, entering the A-site of stalled ribosomes, displacing the stalled mRNA. The ribosome then switches to translate the ORF on the tmRNA; the nascent peptide is terminated with the 'tag peptide' encoded by the tmRNA and targeted for degradation. The ribosome is freed to recommence translation, which seems to be the essential function of trans-translation.</text>
</comment>
<comment type="subcellular location">
    <subcellularLocation>
        <location evidence="1">Cytoplasm</location>
    </subcellularLocation>
    <text evidence="1">The tmRNA-SmpB complex associates with stalled 70S ribosomes.</text>
</comment>
<comment type="similarity">
    <text evidence="1">Belongs to the SmpB family.</text>
</comment>
<evidence type="ECO:0000255" key="1">
    <source>
        <dbReference type="HAMAP-Rule" id="MF_00023"/>
    </source>
</evidence>
<feature type="chain" id="PRO_1000002063" description="SsrA-binding protein">
    <location>
        <begin position="1"/>
        <end position="161"/>
    </location>
</feature>
<reference key="1">
    <citation type="journal article" date="2007" name="Genome Biol.">
        <title>Characterization and modeling of the Haemophilus influenzae core and supragenomes based on the complete genomic sequences of Rd and 12 clinical nontypeable strains.</title>
        <authorList>
            <person name="Hogg J.S."/>
            <person name="Hu F.Z."/>
            <person name="Janto B."/>
            <person name="Boissy R."/>
            <person name="Hayes J."/>
            <person name="Keefe R."/>
            <person name="Post J.C."/>
            <person name="Ehrlich G.D."/>
        </authorList>
    </citation>
    <scope>NUCLEOTIDE SEQUENCE [LARGE SCALE GENOMIC DNA]</scope>
    <source>
        <strain>PittEE</strain>
    </source>
</reference>
<keyword id="KW-0963">Cytoplasm</keyword>
<keyword id="KW-0694">RNA-binding</keyword>
<sequence>MTKKKVKPNSNTIALNKRARHDYFIEDEIEAGLELQGWEVKSMRAGKANISDSYVIFKNGEAFLFGASIQPLNVASTHIVCDPTRTRKLLLNKRELASLFGKANRDGFTIVALSLYWKSAWAKVKIGLAKGKKQQDKRDDIKEREWKVTKDRIMKNAHRRS</sequence>